<organism>
    <name type="scientific">Mus musculus</name>
    <name type="common">Mouse</name>
    <dbReference type="NCBI Taxonomy" id="10090"/>
    <lineage>
        <taxon>Eukaryota</taxon>
        <taxon>Metazoa</taxon>
        <taxon>Chordata</taxon>
        <taxon>Craniata</taxon>
        <taxon>Vertebrata</taxon>
        <taxon>Euteleostomi</taxon>
        <taxon>Mammalia</taxon>
        <taxon>Eutheria</taxon>
        <taxon>Euarchontoglires</taxon>
        <taxon>Glires</taxon>
        <taxon>Rodentia</taxon>
        <taxon>Myomorpha</taxon>
        <taxon>Muroidea</taxon>
        <taxon>Muridae</taxon>
        <taxon>Murinae</taxon>
        <taxon>Mus</taxon>
        <taxon>Mus</taxon>
    </lineage>
</organism>
<name>SDF1_MOUSE</name>
<keyword id="KW-0025">Alternative splicing</keyword>
<keyword id="KW-0145">Chemotaxis</keyword>
<keyword id="KW-0202">Cytokine</keyword>
<keyword id="KW-1015">Disulfide bond</keyword>
<keyword id="KW-0339">Growth factor</keyword>
<keyword id="KW-1185">Reference proteome</keyword>
<keyword id="KW-0964">Secreted</keyword>
<keyword id="KW-0732">Signal</keyword>
<gene>
    <name type="primary">Cxcl12</name>
    <name type="synonym">Sdf1</name>
</gene>
<protein>
    <recommendedName>
        <fullName>Stromal cell-derived factor 1</fullName>
        <shortName>SDF-1</shortName>
    </recommendedName>
    <alternativeName>
        <fullName>12-O-tetradecanoylphorbol 13-acetate repressed protein 1</fullName>
        <shortName>TPAR1</shortName>
    </alternativeName>
    <alternativeName>
        <fullName>C-X-C motif chemokine 12</fullName>
    </alternativeName>
    <alternativeName>
        <fullName>Pre-B cell growth-stimulating factor</fullName>
        <shortName>PBSF</shortName>
    </alternativeName>
    <alternativeName>
        <fullName>Thymic lymphoma cell-stimulating factor</fullName>
        <shortName>TLSF</shortName>
    </alternativeName>
</protein>
<feature type="signal peptide" evidence="3">
    <location>
        <begin position="1"/>
        <end position="21"/>
    </location>
</feature>
<feature type="chain" id="PRO_0000005112" description="Stromal cell-derived factor 1">
    <location>
        <begin position="22"/>
        <end position="93"/>
    </location>
</feature>
<feature type="region of interest" description="Receptor and heparin binding" evidence="1">
    <location>
        <begin position="29"/>
        <end position="33"/>
    </location>
</feature>
<feature type="region of interest" description="Receptor binding" evidence="1">
    <location>
        <begin position="39"/>
        <end position="41"/>
    </location>
</feature>
<feature type="region of interest" description="Receptor binding" evidence="1">
    <location>
        <begin position="48"/>
        <end position="50"/>
    </location>
</feature>
<feature type="region of interest" description="Receptor binding" evidence="1">
    <location>
        <begin position="60"/>
        <end position="70"/>
    </location>
</feature>
<feature type="short sequence motif" description="Receptor activation motif" evidence="1">
    <location>
        <begin position="22"/>
        <end position="23"/>
    </location>
</feature>
<feature type="binding site" evidence="1">
    <location>
        <begin position="41"/>
        <end position="51"/>
    </location>
    <ligand>
        <name>heparin</name>
        <dbReference type="ChEBI" id="CHEBI:28304"/>
    </ligand>
</feature>
<feature type="binding site" evidence="1">
    <location>
        <position position="62"/>
    </location>
    <ligand>
        <name>heparin</name>
        <dbReference type="ChEBI" id="CHEBI:28304"/>
    </ligand>
</feature>
<feature type="binding site" evidence="1">
    <location>
        <position position="69"/>
    </location>
    <ligand>
        <name>heparin</name>
        <dbReference type="ChEBI" id="CHEBI:28304"/>
    </ligand>
</feature>
<feature type="binding site" evidence="1">
    <location>
        <position position="85"/>
    </location>
    <ligand>
        <name>heparin</name>
        <dbReference type="ChEBI" id="CHEBI:28304"/>
    </ligand>
</feature>
<feature type="site" description="Important for integrin interaction and activation" evidence="2">
    <location>
        <position position="45"/>
    </location>
</feature>
<feature type="site" description="Important for dimer formation" evidence="1">
    <location>
        <position position="46"/>
    </location>
</feature>
<feature type="site" description="Important for integrin interaction and activation" evidence="2">
    <location>
        <position position="48"/>
    </location>
</feature>
<feature type="site" description="Important for integrin interaction and activation" evidence="2">
    <location>
        <position position="64"/>
    </location>
</feature>
<feature type="disulfide bond" evidence="1">
    <location>
        <begin position="30"/>
        <end position="55"/>
    </location>
</feature>
<feature type="disulfide bond" evidence="1">
    <location>
        <begin position="32"/>
        <end position="71"/>
    </location>
</feature>
<feature type="splice variant" id="VSP_037607" description="In isoform Alpha." evidence="7 8 9 10 11 12">
    <location>
        <begin position="90"/>
        <end position="93"/>
    </location>
</feature>
<dbReference type="EMBL" id="L12029">
    <property type="protein sequence ID" value="AAA40100.1"/>
    <property type="molecule type" value="mRNA"/>
</dbReference>
<dbReference type="EMBL" id="L12030">
    <property type="protein sequence ID" value="AAA40101.1"/>
    <property type="molecule type" value="mRNA"/>
</dbReference>
<dbReference type="EMBL" id="S74318">
    <property type="protein sequence ID" value="AAB32650.1"/>
    <property type="molecule type" value="mRNA"/>
</dbReference>
<dbReference type="EMBL" id="D21072">
    <property type="protein sequence ID" value="BAA04648.1"/>
    <property type="molecule type" value="mRNA"/>
</dbReference>
<dbReference type="EMBL" id="D43804">
    <property type="protein sequence ID" value="BAA07862.1"/>
    <property type="molecule type" value="mRNA"/>
</dbReference>
<dbReference type="EMBL" id="D43805">
    <property type="protein sequence ID" value="BAA07863.1"/>
    <property type="molecule type" value="mRNA"/>
</dbReference>
<dbReference type="EMBL" id="AK045092">
    <property type="protein sequence ID" value="BAC32216.1"/>
    <property type="molecule type" value="mRNA"/>
</dbReference>
<dbReference type="EMBL" id="AK075596">
    <property type="protein sequence ID" value="BAC35845.1"/>
    <property type="molecule type" value="mRNA"/>
</dbReference>
<dbReference type="EMBL" id="AK157553">
    <property type="protein sequence ID" value="BAE34120.1"/>
    <property type="molecule type" value="mRNA"/>
</dbReference>
<dbReference type="EMBL" id="CT010389">
    <property type="protein sequence ID" value="CAJ18596.1"/>
    <property type="molecule type" value="mRNA"/>
</dbReference>
<dbReference type="EMBL" id="CH466523">
    <property type="protein sequence ID" value="EDK99572.1"/>
    <property type="molecule type" value="Genomic_DNA"/>
</dbReference>
<dbReference type="EMBL" id="BC006640">
    <property type="protein sequence ID" value="AAH06640.1"/>
    <property type="molecule type" value="mRNA"/>
</dbReference>
<dbReference type="CCDS" id="CCDS39605.1">
    <molecule id="P40224-2"/>
</dbReference>
<dbReference type="CCDS" id="CCDS39606.1">
    <molecule id="P40224-1"/>
</dbReference>
<dbReference type="PIR" id="A53497">
    <property type="entry name" value="A53497"/>
</dbReference>
<dbReference type="PIR" id="I81182">
    <property type="entry name" value="I81182"/>
</dbReference>
<dbReference type="RefSeq" id="NP_038683.1">
    <molecule id="P40224-2"/>
    <property type="nucleotide sequence ID" value="NM_013655.4"/>
</dbReference>
<dbReference type="RefSeq" id="NP_068350.1">
    <molecule id="P40224-1"/>
    <property type="nucleotide sequence ID" value="NM_021704.3"/>
</dbReference>
<dbReference type="BMRB" id="P40224"/>
<dbReference type="SMR" id="P40224"/>
<dbReference type="DIP" id="DIP-61153N"/>
<dbReference type="FunCoup" id="P40224">
    <property type="interactions" value="1893"/>
</dbReference>
<dbReference type="IntAct" id="P40224">
    <property type="interactions" value="3"/>
</dbReference>
<dbReference type="STRING" id="10090.ENSMUSP00000072800"/>
<dbReference type="iPTMnet" id="P40224"/>
<dbReference type="PhosphoSitePlus" id="P40224"/>
<dbReference type="jPOST" id="P40224"/>
<dbReference type="PaxDb" id="10090-ENSMUSP00000072800"/>
<dbReference type="ProteomicsDB" id="256759">
    <molecule id="P40224-2"/>
</dbReference>
<dbReference type="ProteomicsDB" id="256760">
    <molecule id="P40224-1"/>
</dbReference>
<dbReference type="Pumba" id="P40224"/>
<dbReference type="ABCD" id="P40224">
    <property type="antibodies" value="2 sequenced antibodies"/>
</dbReference>
<dbReference type="Antibodypedia" id="4314">
    <property type="antibodies" value="901 antibodies from 44 providers"/>
</dbReference>
<dbReference type="DNASU" id="20315"/>
<dbReference type="Ensembl" id="ENSMUST00000112866.8">
    <molecule id="P40224-1"/>
    <property type="protein sequence ID" value="ENSMUSP00000108487.2"/>
    <property type="gene ID" value="ENSMUSG00000061353.12"/>
</dbReference>
<dbReference type="Ensembl" id="ENSMUST00000112871.8">
    <molecule id="P40224-2"/>
    <property type="protein sequence ID" value="ENSMUSP00000108492.2"/>
    <property type="gene ID" value="ENSMUSG00000061353.12"/>
</dbReference>
<dbReference type="GeneID" id="20315"/>
<dbReference type="KEGG" id="mmu:20315"/>
<dbReference type="UCSC" id="uc009dks.2">
    <molecule id="P40224-2"/>
    <property type="organism name" value="mouse"/>
</dbReference>
<dbReference type="AGR" id="MGI:103556"/>
<dbReference type="CTD" id="6387"/>
<dbReference type="MGI" id="MGI:103556">
    <property type="gene designation" value="Cxcl12"/>
</dbReference>
<dbReference type="VEuPathDB" id="HostDB:ENSMUSG00000061353"/>
<dbReference type="eggNOG" id="ENOG502S54U">
    <property type="taxonomic scope" value="Eukaryota"/>
</dbReference>
<dbReference type="GeneTree" id="ENSGT00390000014056"/>
<dbReference type="HOGENOM" id="CLU_154284_2_0_1"/>
<dbReference type="InParanoid" id="P40224"/>
<dbReference type="OMA" id="IINRCKC"/>
<dbReference type="OrthoDB" id="9884353at2759"/>
<dbReference type="PhylomeDB" id="P40224"/>
<dbReference type="Reactome" id="R-MMU-376176">
    <property type="pathway name" value="Signaling by ROBO receptors"/>
</dbReference>
<dbReference type="Reactome" id="R-MMU-380108">
    <property type="pathway name" value="Chemokine receptors bind chemokines"/>
</dbReference>
<dbReference type="Reactome" id="R-MMU-418594">
    <property type="pathway name" value="G alpha (i) signalling events"/>
</dbReference>
<dbReference type="BioGRID-ORCS" id="20315">
    <property type="hits" value="0 hits in 82 CRISPR screens"/>
</dbReference>
<dbReference type="ChiTaRS" id="Cxcl12">
    <property type="organism name" value="mouse"/>
</dbReference>
<dbReference type="PRO" id="PR:P40224"/>
<dbReference type="Proteomes" id="UP000000589">
    <property type="component" value="Chromosome 6"/>
</dbReference>
<dbReference type="RNAct" id="P40224">
    <property type="molecule type" value="protein"/>
</dbReference>
<dbReference type="Bgee" id="ENSMUSG00000061353">
    <property type="expression patterns" value="Expressed in stroma of bone marrow and 329 other cell types or tissues"/>
</dbReference>
<dbReference type="ExpressionAtlas" id="P40224">
    <property type="expression patterns" value="baseline and differential"/>
</dbReference>
<dbReference type="GO" id="GO:0009897">
    <property type="term" value="C:external side of plasma membrane"/>
    <property type="evidence" value="ECO:0000314"/>
    <property type="project" value="MGI"/>
</dbReference>
<dbReference type="GO" id="GO:0005615">
    <property type="term" value="C:extracellular space"/>
    <property type="evidence" value="ECO:0007669"/>
    <property type="project" value="UniProtKB-KW"/>
</dbReference>
<dbReference type="GO" id="GO:0008009">
    <property type="term" value="F:chemokine activity"/>
    <property type="evidence" value="ECO:0000314"/>
    <property type="project" value="MGI"/>
</dbReference>
<dbReference type="GO" id="GO:0042379">
    <property type="term" value="F:chemokine receptor binding"/>
    <property type="evidence" value="ECO:0000250"/>
    <property type="project" value="UniProtKB"/>
</dbReference>
<dbReference type="GO" id="GO:0008083">
    <property type="term" value="F:growth factor activity"/>
    <property type="evidence" value="ECO:0007669"/>
    <property type="project" value="UniProtKB-KW"/>
</dbReference>
<dbReference type="GO" id="GO:0005178">
    <property type="term" value="F:integrin binding"/>
    <property type="evidence" value="ECO:0000250"/>
    <property type="project" value="UniProtKB"/>
</dbReference>
<dbReference type="GO" id="GO:0001667">
    <property type="term" value="P:ameboidal-type cell migration"/>
    <property type="evidence" value="ECO:0000315"/>
    <property type="project" value="MGI"/>
</dbReference>
<dbReference type="GO" id="GO:0043534">
    <property type="term" value="P:blood vessel endothelial cell migration"/>
    <property type="evidence" value="ECO:0000315"/>
    <property type="project" value="MGI"/>
</dbReference>
<dbReference type="GO" id="GO:0007420">
    <property type="term" value="P:brain development"/>
    <property type="evidence" value="ECO:0000314"/>
    <property type="project" value="MGI"/>
</dbReference>
<dbReference type="GO" id="GO:0001569">
    <property type="term" value="P:branching involved in blood vessel morphogenesis"/>
    <property type="evidence" value="ECO:0000315"/>
    <property type="project" value="MGI"/>
</dbReference>
<dbReference type="GO" id="GO:0098609">
    <property type="term" value="P:cell-cell adhesion"/>
    <property type="evidence" value="ECO:0000314"/>
    <property type="project" value="MGI"/>
</dbReference>
<dbReference type="GO" id="GO:0006952">
    <property type="term" value="P:defense response"/>
    <property type="evidence" value="ECO:0007669"/>
    <property type="project" value="InterPro"/>
</dbReference>
<dbReference type="GO" id="GO:0071542">
    <property type="term" value="P:dopaminergic neuron differentiation"/>
    <property type="evidence" value="ECO:0000314"/>
    <property type="project" value="ParkinsonsUK-UCL"/>
</dbReference>
<dbReference type="GO" id="GO:0007281">
    <property type="term" value="P:germ cell development"/>
    <property type="evidence" value="ECO:0000314"/>
    <property type="project" value="MGI"/>
</dbReference>
<dbReference type="GO" id="GO:0008354">
    <property type="term" value="P:germ cell migration"/>
    <property type="evidence" value="ECO:0000314"/>
    <property type="project" value="MGI"/>
</dbReference>
<dbReference type="GO" id="GO:0006955">
    <property type="term" value="P:immune response"/>
    <property type="evidence" value="ECO:0007669"/>
    <property type="project" value="InterPro"/>
</dbReference>
<dbReference type="GO" id="GO:0050930">
    <property type="term" value="P:induction of positive chemotaxis"/>
    <property type="evidence" value="ECO:0000314"/>
    <property type="project" value="MGI"/>
</dbReference>
<dbReference type="GO" id="GO:0033622">
    <property type="term" value="P:integrin activation"/>
    <property type="evidence" value="ECO:0000250"/>
    <property type="project" value="UniProtKB"/>
</dbReference>
<dbReference type="GO" id="GO:0008045">
    <property type="term" value="P:motor neuron axon guidance"/>
    <property type="evidence" value="ECO:0000315"/>
    <property type="project" value="MGI"/>
</dbReference>
<dbReference type="GO" id="GO:0008285">
    <property type="term" value="P:negative regulation of cell population proliferation"/>
    <property type="evidence" value="ECO:0000316"/>
    <property type="project" value="MGI"/>
</dbReference>
<dbReference type="GO" id="GO:0090280">
    <property type="term" value="P:positive regulation of calcium ion import"/>
    <property type="evidence" value="ECO:0000314"/>
    <property type="project" value="MGI"/>
</dbReference>
<dbReference type="GO" id="GO:0045785">
    <property type="term" value="P:positive regulation of cell adhesion"/>
    <property type="evidence" value="ECO:0000266"/>
    <property type="project" value="MGI"/>
</dbReference>
<dbReference type="GO" id="GO:0030335">
    <property type="term" value="P:positive regulation of cell migration"/>
    <property type="evidence" value="ECO:0000314"/>
    <property type="project" value="MGI"/>
</dbReference>
<dbReference type="GO" id="GO:0050921">
    <property type="term" value="P:positive regulation of chemotaxis"/>
    <property type="evidence" value="ECO:0000316"/>
    <property type="project" value="MGI"/>
</dbReference>
<dbReference type="GO" id="GO:0070374">
    <property type="term" value="P:positive regulation of ERK1 and ERK2 cascade"/>
    <property type="evidence" value="ECO:0000316"/>
    <property type="project" value="MGI"/>
</dbReference>
<dbReference type="GO" id="GO:1901741">
    <property type="term" value="P:positive regulation of myoblast fusion"/>
    <property type="evidence" value="ECO:0000315"/>
    <property type="project" value="MGI"/>
</dbReference>
<dbReference type="GO" id="GO:0051897">
    <property type="term" value="P:positive regulation of phosphatidylinositol 3-kinase/protein kinase B signal transduction"/>
    <property type="evidence" value="ECO:0000316"/>
    <property type="project" value="MGI"/>
</dbReference>
<dbReference type="GO" id="GO:2000406">
    <property type="term" value="P:positive regulation of T cell migration"/>
    <property type="evidence" value="ECO:0000266"/>
    <property type="project" value="MGI"/>
</dbReference>
<dbReference type="GO" id="GO:0030334">
    <property type="term" value="P:regulation of cell migration"/>
    <property type="evidence" value="ECO:0000314"/>
    <property type="project" value="MGI"/>
</dbReference>
<dbReference type="GO" id="GO:0042098">
    <property type="term" value="P:T cell proliferation"/>
    <property type="evidence" value="ECO:0000315"/>
    <property type="project" value="MGI"/>
</dbReference>
<dbReference type="CDD" id="cd00273">
    <property type="entry name" value="Chemokine_CXC"/>
    <property type="match status" value="1"/>
</dbReference>
<dbReference type="FunFam" id="2.40.50.40:FF:000010">
    <property type="entry name" value="Stromal cell-derived factor 1 precursor"/>
    <property type="match status" value="1"/>
</dbReference>
<dbReference type="Gene3D" id="2.40.50.40">
    <property type="match status" value="1"/>
</dbReference>
<dbReference type="InterPro" id="IPR039809">
    <property type="entry name" value="Chemokine_b/g/d"/>
</dbReference>
<dbReference type="InterPro" id="IPR001811">
    <property type="entry name" value="Chemokine_IL8-like_dom"/>
</dbReference>
<dbReference type="InterPro" id="IPR033899">
    <property type="entry name" value="CXC_Chemokine_domain"/>
</dbReference>
<dbReference type="InterPro" id="IPR036048">
    <property type="entry name" value="Interleukin_8-like_sf"/>
</dbReference>
<dbReference type="PANTHER" id="PTHR12015">
    <property type="entry name" value="SMALL INDUCIBLE CYTOKINE A"/>
    <property type="match status" value="1"/>
</dbReference>
<dbReference type="PANTHER" id="PTHR12015:SF193">
    <property type="entry name" value="STROMAL CELL-DERIVED FACTOR 1"/>
    <property type="match status" value="1"/>
</dbReference>
<dbReference type="Pfam" id="PF00048">
    <property type="entry name" value="IL8"/>
    <property type="match status" value="1"/>
</dbReference>
<dbReference type="PRINTS" id="PR00436">
    <property type="entry name" value="INTERLEUKIN8"/>
</dbReference>
<dbReference type="SMART" id="SM00199">
    <property type="entry name" value="SCY"/>
    <property type="match status" value="1"/>
</dbReference>
<dbReference type="SUPFAM" id="SSF54117">
    <property type="entry name" value="Interleukin 8-like chemokines"/>
    <property type="match status" value="1"/>
</dbReference>
<sequence>MDAKVVAVLALVLAALCISDGKPVSLSYRCPCRFFESHIARANVKHLKILNTPNCALQIVARLKNNNRQVCIDPKLKWIQEYLEKALNKRLKM</sequence>
<proteinExistence type="evidence at transcript level"/>
<comment type="function">
    <text evidence="2 5 6">Chemoattractant active on T-lymphocytes and monocytes but not neutrophils. Activates the C-X-C chemokine receptor CXCR4 to induce a rapid and transient rise in the level of intracellular calcium ions and chemotaxis. Also binds to atypical chemokine receptor ACKR3, which activates the beta-arrestin pathway and acts as a scavenger receptor for SDF-1. Binds to the allosteric site (site 2) of integrins and activates integrins ITGAV:ITGB3, ITGA4:ITGB1 and ITGA5:ITGB1 in a CXCR4-independent manner (By similarity). Acts as a positive regulator of monocyte migration and a negative regulator of monocyte adhesion via the LYN kinase. Stimulates migration of monocytes and T-lymphocytes through its receptors, CXCR4 and ACKR3, and decreases monocyte adherence to surfaces coated with ICAM-1, a ligand for beta-2 integrins. SDF1A/CXCR4 signaling axis inhibits beta-2 integrin LFA-1 mediated adhesion of monocytes to ICAM-1 through LYN kinase. Plays a protective role after myocardial infarction. Induces down-regulation and internalization of ACKR3 expressed in various cells (By similarity). Has several critical functions during embryonic development; required for B-cell lymphopoiesis, myelopoiesis in bone marrow and heart ventricular septum formation. Stimulates the proliferation of bone marrow-derived B-cell progenitors in the presence of IL7 as well as growth of stromal cell-dependent pre-B-cells (PubMed:8134392).</text>
</comment>
<comment type="subunit">
    <text evidence="2">Monomer or homodimer; in equilibrium. Dimer formation is induced by non acidic pH and the presence of multivalent anions, and by binding to CXCR4 or heparin. Monomeric form is required for full chemotactic activity and resistance to ischemia/reperfusion injury, whereas the dimeric form acts as a partial agonist of CXCR4, stimulating Ca2+ mobilization but with no chemotactic activity and instead acts as a selective antagonist that blocks chemotaxis induced by the monomeric form. Interacts with the N-terminus of ACKR3. Interacts with integrin subunit ITGB3 (via the allosteric site (site 2)). Interacts with TNFAIP6 (via Link domain).</text>
</comment>
<comment type="subcellular location">
    <subcellularLocation>
        <location>Secreted</location>
    </subcellularLocation>
</comment>
<comment type="alternative products">
    <event type="alternative splicing"/>
    <isoform>
        <id>P40224-2</id>
        <name>Beta</name>
        <sequence type="displayed"/>
    </isoform>
    <isoform>
        <id>P40224-1</id>
        <name>Alpha</name>
        <sequence type="described" ref="VSP_037607"/>
    </isoform>
</comment>
<comment type="tissue specificity">
    <text evidence="4">Highest expression levels detected in kidney, liver, spleen and muscle. Isoform Alpha is expressed ubiquitously but at varying levels, while isoform Beta displays tissue-specific expression, with expression detected in kidney, liver, heart, spleen and muscle but not in lung, colon, brain, skin and stomach.</text>
</comment>
<comment type="induction">
    <text evidence="4">Down-regulated by 12-O-tetradecanoylphorbol 13-acetate (TPA), with 5-fold decrease in expression levels at 1 hour after TPA treatment, 12-fold decrease at 4 hours, undetectable levels after 8 hours and low-level expression returning at 24 hours after treatment. Down-regulated by serum stimulation, with expression levels reaching their minimum at 4 hours after stimulation and returning back to normal levels at 16 hours after stimulation.</text>
</comment>
<comment type="disruption phenotype">
    <text evidence="6">Half of the embryos die by 18.5 dpc, and neonates die within an hour. Mutants display defective B-lymphopoiesis, defective myelopoiesis in the bone marrow but not in the liver, and defective formation of the heart ventricular septum.</text>
</comment>
<comment type="similarity">
    <text evidence="13">Belongs to the intercrine alpha (chemokine CxC) family.</text>
</comment>
<evidence type="ECO:0000250" key="1"/>
<evidence type="ECO:0000250" key="2">
    <source>
        <dbReference type="UniProtKB" id="P48061"/>
    </source>
</evidence>
<evidence type="ECO:0000255" key="3"/>
<evidence type="ECO:0000269" key="4">
    <source>
    </source>
</evidence>
<evidence type="ECO:0000269" key="5">
    <source>
    </source>
</evidence>
<evidence type="ECO:0000269" key="6">
    <source>
    </source>
</evidence>
<evidence type="ECO:0000303" key="7">
    <source>
    </source>
</evidence>
<evidence type="ECO:0000303" key="8">
    <source>
    </source>
</evidence>
<evidence type="ECO:0000303" key="9">
    <source>
    </source>
</evidence>
<evidence type="ECO:0000303" key="10">
    <source>
    </source>
</evidence>
<evidence type="ECO:0000303" key="11">
    <source>
    </source>
</evidence>
<evidence type="ECO:0000303" key="12">
    <source ref="4"/>
</evidence>
<evidence type="ECO:0000305" key="13"/>
<accession>P40224</accession>
<accession>Q4FJL5</accession>
<accession>Q543V6</accession>
<reference key="1">
    <citation type="journal article" date="1993" name="Science">
        <title>Signal sequence trap: a cloning strategy for secreted proteins and type I membrane proteins.</title>
        <authorList>
            <person name="Tashiro K."/>
            <person name="Tada H."/>
            <person name="Heilker R."/>
            <person name="Shirozu M."/>
            <person name="Nakano T."/>
            <person name="Honjo T."/>
        </authorList>
    </citation>
    <scope>NUCLEOTIDE SEQUENCE [MRNA] (ISOFORMS ALPHA AND BETA)</scope>
</reference>
<reference key="2">
    <citation type="journal article" date="1994" name="Exp. Cell Res.">
        <title>Molecular cloning of TPAR1, a gene whose expression is repressed by the tumor promoter 12-O-tetradecanoylphorbol 13-acetate (TPA).</title>
        <authorList>
            <person name="Jiang W."/>
            <person name="Zhou P."/>
            <person name="Kahn S.M."/>
            <person name="Tomita N."/>
            <person name="Johnson M.D."/>
            <person name="Weinstein I.B."/>
        </authorList>
    </citation>
    <scope>NUCLEOTIDE SEQUENCE [MRNA] (ISOFORM ALPHA)</scope>
    <scope>ALTERNATIVE SPLICING</scope>
    <scope>TISSUE SPECIFICITY</scope>
    <scope>INDUCTION</scope>
</reference>
<reference key="3">
    <citation type="journal article" date="1994" name="Proc. Natl. Acad. Sci. U.S.A.">
        <title>Molecular cloning and structure of a pre-B-cell growth-stimulating factor.</title>
        <authorList>
            <person name="Nagasawa T."/>
            <person name="Kikutani H."/>
            <person name="Kishimoto T."/>
        </authorList>
    </citation>
    <scope>NUCLEOTIDE SEQUENCE [MRNA] (ISOFORM ALPHA)</scope>
    <scope>FUNCTION</scope>
</reference>
<reference key="4">
    <citation type="submission" date="1994-12" db="EMBL/GenBank/DDBJ databases">
        <authorList>
            <person name="Nomura M."/>
            <person name="Nakata Y."/>
            <person name="Uzawa A."/>
            <person name="Nose M."/>
            <person name="Akashi M."/>
            <person name="Suzuki G."/>
        </authorList>
    </citation>
    <scope>NUCLEOTIDE SEQUENCE [MRNA] (ISOFORMS ALPHA AND BETA)</scope>
    <source>
        <strain>AKR/J</strain>
    </source>
</reference>
<reference key="5">
    <citation type="journal article" date="2005" name="Science">
        <title>The transcriptional landscape of the mammalian genome.</title>
        <authorList>
            <person name="Carninci P."/>
            <person name="Kasukawa T."/>
            <person name="Katayama S."/>
            <person name="Gough J."/>
            <person name="Frith M.C."/>
            <person name="Maeda N."/>
            <person name="Oyama R."/>
            <person name="Ravasi T."/>
            <person name="Lenhard B."/>
            <person name="Wells C."/>
            <person name="Kodzius R."/>
            <person name="Shimokawa K."/>
            <person name="Bajic V.B."/>
            <person name="Brenner S.E."/>
            <person name="Batalov S."/>
            <person name="Forrest A.R."/>
            <person name="Zavolan M."/>
            <person name="Davis M.J."/>
            <person name="Wilming L.G."/>
            <person name="Aidinis V."/>
            <person name="Allen J.E."/>
            <person name="Ambesi-Impiombato A."/>
            <person name="Apweiler R."/>
            <person name="Aturaliya R.N."/>
            <person name="Bailey T.L."/>
            <person name="Bansal M."/>
            <person name="Baxter L."/>
            <person name="Beisel K.W."/>
            <person name="Bersano T."/>
            <person name="Bono H."/>
            <person name="Chalk A.M."/>
            <person name="Chiu K.P."/>
            <person name="Choudhary V."/>
            <person name="Christoffels A."/>
            <person name="Clutterbuck D.R."/>
            <person name="Crowe M.L."/>
            <person name="Dalla E."/>
            <person name="Dalrymple B.P."/>
            <person name="de Bono B."/>
            <person name="Della Gatta G."/>
            <person name="di Bernardo D."/>
            <person name="Down T."/>
            <person name="Engstrom P."/>
            <person name="Fagiolini M."/>
            <person name="Faulkner G."/>
            <person name="Fletcher C.F."/>
            <person name="Fukushima T."/>
            <person name="Furuno M."/>
            <person name="Futaki S."/>
            <person name="Gariboldi M."/>
            <person name="Georgii-Hemming P."/>
            <person name="Gingeras T.R."/>
            <person name="Gojobori T."/>
            <person name="Green R.E."/>
            <person name="Gustincich S."/>
            <person name="Harbers M."/>
            <person name="Hayashi Y."/>
            <person name="Hensch T.K."/>
            <person name="Hirokawa N."/>
            <person name="Hill D."/>
            <person name="Huminiecki L."/>
            <person name="Iacono M."/>
            <person name="Ikeo K."/>
            <person name="Iwama A."/>
            <person name="Ishikawa T."/>
            <person name="Jakt M."/>
            <person name="Kanapin A."/>
            <person name="Katoh M."/>
            <person name="Kawasawa Y."/>
            <person name="Kelso J."/>
            <person name="Kitamura H."/>
            <person name="Kitano H."/>
            <person name="Kollias G."/>
            <person name="Krishnan S.P."/>
            <person name="Kruger A."/>
            <person name="Kummerfeld S.K."/>
            <person name="Kurochkin I.V."/>
            <person name="Lareau L.F."/>
            <person name="Lazarevic D."/>
            <person name="Lipovich L."/>
            <person name="Liu J."/>
            <person name="Liuni S."/>
            <person name="McWilliam S."/>
            <person name="Madan Babu M."/>
            <person name="Madera M."/>
            <person name="Marchionni L."/>
            <person name="Matsuda H."/>
            <person name="Matsuzawa S."/>
            <person name="Miki H."/>
            <person name="Mignone F."/>
            <person name="Miyake S."/>
            <person name="Morris K."/>
            <person name="Mottagui-Tabar S."/>
            <person name="Mulder N."/>
            <person name="Nakano N."/>
            <person name="Nakauchi H."/>
            <person name="Ng P."/>
            <person name="Nilsson R."/>
            <person name="Nishiguchi S."/>
            <person name="Nishikawa S."/>
            <person name="Nori F."/>
            <person name="Ohara O."/>
            <person name="Okazaki Y."/>
            <person name="Orlando V."/>
            <person name="Pang K.C."/>
            <person name="Pavan W.J."/>
            <person name="Pavesi G."/>
            <person name="Pesole G."/>
            <person name="Petrovsky N."/>
            <person name="Piazza S."/>
            <person name="Reed J."/>
            <person name="Reid J.F."/>
            <person name="Ring B.Z."/>
            <person name="Ringwald M."/>
            <person name="Rost B."/>
            <person name="Ruan Y."/>
            <person name="Salzberg S.L."/>
            <person name="Sandelin A."/>
            <person name="Schneider C."/>
            <person name="Schoenbach C."/>
            <person name="Sekiguchi K."/>
            <person name="Semple C.A."/>
            <person name="Seno S."/>
            <person name="Sessa L."/>
            <person name="Sheng Y."/>
            <person name="Shibata Y."/>
            <person name="Shimada H."/>
            <person name="Shimada K."/>
            <person name="Silva D."/>
            <person name="Sinclair B."/>
            <person name="Sperling S."/>
            <person name="Stupka E."/>
            <person name="Sugiura K."/>
            <person name="Sultana R."/>
            <person name="Takenaka Y."/>
            <person name="Taki K."/>
            <person name="Tammoja K."/>
            <person name="Tan S.L."/>
            <person name="Tang S."/>
            <person name="Taylor M.S."/>
            <person name="Tegner J."/>
            <person name="Teichmann S.A."/>
            <person name="Ueda H.R."/>
            <person name="van Nimwegen E."/>
            <person name="Verardo R."/>
            <person name="Wei C.L."/>
            <person name="Yagi K."/>
            <person name="Yamanishi H."/>
            <person name="Zabarovsky E."/>
            <person name="Zhu S."/>
            <person name="Zimmer A."/>
            <person name="Hide W."/>
            <person name="Bult C."/>
            <person name="Grimmond S.M."/>
            <person name="Teasdale R.D."/>
            <person name="Liu E.T."/>
            <person name="Brusic V."/>
            <person name="Quackenbush J."/>
            <person name="Wahlestedt C."/>
            <person name="Mattick J.S."/>
            <person name="Hume D.A."/>
            <person name="Kai C."/>
            <person name="Sasaki D."/>
            <person name="Tomaru Y."/>
            <person name="Fukuda S."/>
            <person name="Kanamori-Katayama M."/>
            <person name="Suzuki M."/>
            <person name="Aoki J."/>
            <person name="Arakawa T."/>
            <person name="Iida J."/>
            <person name="Imamura K."/>
            <person name="Itoh M."/>
            <person name="Kato T."/>
            <person name="Kawaji H."/>
            <person name="Kawagashira N."/>
            <person name="Kawashima T."/>
            <person name="Kojima M."/>
            <person name="Kondo S."/>
            <person name="Konno H."/>
            <person name="Nakano K."/>
            <person name="Ninomiya N."/>
            <person name="Nishio T."/>
            <person name="Okada M."/>
            <person name="Plessy C."/>
            <person name="Shibata K."/>
            <person name="Shiraki T."/>
            <person name="Suzuki S."/>
            <person name="Tagami M."/>
            <person name="Waki K."/>
            <person name="Watahiki A."/>
            <person name="Okamura-Oho Y."/>
            <person name="Suzuki H."/>
            <person name="Kawai J."/>
            <person name="Hayashizaki Y."/>
        </authorList>
    </citation>
    <scope>NUCLEOTIDE SEQUENCE [LARGE SCALE MRNA] (ISOFORMS ALPHA AND BETA)</scope>
    <source>
        <strain>C57BL/6J</strain>
        <strain>NOD</strain>
        <tissue>Embryo</tissue>
        <tissue>Kidney</tissue>
        <tissue>Spleen</tissue>
    </source>
</reference>
<reference key="6">
    <citation type="submission" date="2005-07" db="EMBL/GenBank/DDBJ databases">
        <title>Cloning of mouse full open reading frames in Gateway(R) system entry vector (pDONR201).</title>
        <authorList>
            <person name="Ebert L."/>
            <person name="Muenstermann E."/>
            <person name="Schatten R."/>
            <person name="Henze S."/>
            <person name="Bohn E."/>
            <person name="Mollenhauer J."/>
            <person name="Wiemann S."/>
            <person name="Schick M."/>
            <person name="Korn B."/>
        </authorList>
    </citation>
    <scope>NUCLEOTIDE SEQUENCE [LARGE SCALE MRNA] (ISOFORM BETA)</scope>
</reference>
<reference key="7">
    <citation type="submission" date="2005-07" db="EMBL/GenBank/DDBJ databases">
        <authorList>
            <person name="Mural R.J."/>
            <person name="Adams M.D."/>
            <person name="Myers E.W."/>
            <person name="Smith H.O."/>
            <person name="Venter J.C."/>
        </authorList>
    </citation>
    <scope>NUCLEOTIDE SEQUENCE [LARGE SCALE GENOMIC DNA]</scope>
</reference>
<reference key="8">
    <citation type="journal article" date="2004" name="Genome Res.">
        <title>The status, quality, and expansion of the NIH full-length cDNA project: the Mammalian Gene Collection (MGC).</title>
        <authorList>
            <consortium name="The MGC Project Team"/>
        </authorList>
    </citation>
    <scope>NUCLEOTIDE SEQUENCE [LARGE SCALE MRNA] (ISOFORM ALPHA)</scope>
    <source>
        <strain>C57BL/6J</strain>
        <tissue>Mammary gland</tissue>
    </source>
</reference>
<reference key="9">
    <citation type="journal article" date="1996" name="Nature">
        <title>Defects of B-cell lymphopoiesis and bone-marrow myelopoiesis in mice lacking the CXC chemokine PBSF/SDF-1.</title>
        <authorList>
            <person name="Nagasawa T."/>
            <person name="Hirota S."/>
            <person name="Tachibana K."/>
            <person name="Takakura N."/>
            <person name="Nishikawa S."/>
            <person name="Kitamura Y."/>
            <person name="Yoshida N."/>
            <person name="Kikutani H."/>
            <person name="Kishimoto T."/>
        </authorList>
    </citation>
    <scope>FUNCTION</scope>
    <scope>DISRUPTION PHENOTYPE</scope>
</reference>